<organism>
    <name type="scientific">Oryctolagus cuniculus</name>
    <name type="common">Rabbit</name>
    <dbReference type="NCBI Taxonomy" id="9986"/>
    <lineage>
        <taxon>Eukaryota</taxon>
        <taxon>Metazoa</taxon>
        <taxon>Chordata</taxon>
        <taxon>Craniata</taxon>
        <taxon>Vertebrata</taxon>
        <taxon>Euteleostomi</taxon>
        <taxon>Mammalia</taxon>
        <taxon>Eutheria</taxon>
        <taxon>Euarchontoglires</taxon>
        <taxon>Glires</taxon>
        <taxon>Lagomorpha</taxon>
        <taxon>Leporidae</taxon>
        <taxon>Oryctolagus</taxon>
    </lineage>
</organism>
<gene>
    <name type="primary">DPEP1</name>
</gene>
<accession>P31429</accession>
<reference key="1">
    <citation type="journal article" date="1991" name="Biochem. J.">
        <title>Cloning of cDNAs encoding a rabbit renal brush border membrane protein immunologically related to band 3. Sequence similarity with microsomal dipeptidase.</title>
        <authorList>
            <person name="Igarashi P."/>
            <person name="Karniski L.P."/>
        </authorList>
    </citation>
    <scope>NUCLEOTIDE SEQUENCE [MRNA]</scope>
    <scope>PROTEIN SEQUENCE OF 17-40</scope>
    <scope>SUBCELLULAR LOCATION</scope>
    <source>
        <tissue>Kidney</tissue>
    </source>
</reference>
<name>DPEP1_RABIT</name>
<feature type="signal peptide" evidence="6">
    <location>
        <begin position="1"/>
        <end position="16"/>
    </location>
</feature>
<feature type="chain" id="PRO_0000018658" description="Dipeptidase 1">
    <location>
        <begin position="17"/>
        <end position="384"/>
    </location>
</feature>
<feature type="propeptide" id="PRO_0000018659" description="Removed in mature form" evidence="2">
    <location>
        <begin position="385"/>
        <end position="410"/>
    </location>
</feature>
<feature type="binding site" evidence="5">
    <location>
        <position position="36"/>
    </location>
    <ligand>
        <name>Zn(2+)</name>
        <dbReference type="ChEBI" id="CHEBI:29105"/>
        <label>1</label>
        <note>catalytic</note>
    </ligand>
</feature>
<feature type="binding site" evidence="5">
    <location>
        <position position="38"/>
    </location>
    <ligand>
        <name>Zn(2+)</name>
        <dbReference type="ChEBI" id="CHEBI:29105"/>
        <label>1</label>
        <note>catalytic</note>
    </ligand>
</feature>
<feature type="binding site" evidence="5">
    <location>
        <position position="141"/>
    </location>
    <ligand>
        <name>Zn(2+)</name>
        <dbReference type="ChEBI" id="CHEBI:29105"/>
        <label>1</label>
        <note>catalytic</note>
    </ligand>
</feature>
<feature type="binding site" evidence="5">
    <location>
        <position position="141"/>
    </location>
    <ligand>
        <name>Zn(2+)</name>
        <dbReference type="ChEBI" id="CHEBI:29105"/>
        <label>2</label>
        <note>catalytic</note>
    </ligand>
</feature>
<feature type="binding site" evidence="5">
    <location>
        <position position="168"/>
    </location>
    <ligand>
        <name>substrate</name>
    </ligand>
</feature>
<feature type="binding site" evidence="5">
    <location>
        <position position="214"/>
    </location>
    <ligand>
        <name>Zn(2+)</name>
        <dbReference type="ChEBI" id="CHEBI:29105"/>
        <label>2</label>
        <note>catalytic</note>
    </ligand>
</feature>
<feature type="binding site" evidence="5">
    <location>
        <position position="235"/>
    </location>
    <ligand>
        <name>Zn(2+)</name>
        <dbReference type="ChEBI" id="CHEBI:29105"/>
        <label>2</label>
        <note>catalytic</note>
    </ligand>
</feature>
<feature type="binding site" evidence="5">
    <location>
        <position position="246"/>
    </location>
    <ligand>
        <name>substrate</name>
    </ligand>
</feature>
<feature type="binding site" evidence="5">
    <location>
        <position position="304"/>
    </location>
    <ligand>
        <name>substrate</name>
    </ligand>
</feature>
<feature type="lipid moiety-binding region" description="GPI-anchor amidated serine" evidence="3">
    <location>
        <position position="384"/>
    </location>
</feature>
<feature type="glycosylation site" description="N-linked (GlcNAc...) asparagine" evidence="1">
    <location>
        <position position="57"/>
    </location>
</feature>
<feature type="disulfide bond" evidence="5">
    <location>
        <begin position="87"/>
        <end position="170"/>
    </location>
</feature>
<feature type="disulfide bond" evidence="5">
    <location>
        <begin position="242"/>
        <end position="274"/>
    </location>
</feature>
<feature type="disulfide bond" description="Interchain" evidence="5">
    <location>
        <position position="377"/>
    </location>
</feature>
<sequence length="410" mass="45305">MWTSWWLWPLVAVCTADSFLDQAVQILRVTPVIDGHNDLPWQLLNKFNNRLQDSRANLTVLADTHTNIPKLRAGFVGGQFWSAYTPCDTQNKDTVRRTLEQMDVVHRMCQLYPETFLCVTDSAGIQQAFREGKVASLIGVEGGHSIDSSLGVLRALYRLGMRYLTLTHNCNTPWADNWLVDRGDDEAQSGGLSVFGQRVVREMNRLGVMIDLAHVSVATMKAALQLSTAPVIFSHSSAFTVCAHKRNVPDDVLQLVKETGSLVMVNFYNDYVSCASEATLSQVADHLDYIKNVAGAAAVRFGGDFDGVTRLPVGLEDVSKYPDLVAELLRRGWTEAEVRGALAENLLRVFREVEQVSNQAQVPEEEPISLEQLGGSCRTQYGYSEAPSLHRRPGALLASLSLLLLSLGLL</sequence>
<keyword id="KW-1003">Cell membrane</keyword>
<keyword id="KW-0966">Cell projection</keyword>
<keyword id="KW-0224">Dipeptidase</keyword>
<keyword id="KW-0903">Direct protein sequencing</keyword>
<keyword id="KW-1015">Disulfide bond</keyword>
<keyword id="KW-0325">Glycoprotein</keyword>
<keyword id="KW-0336">GPI-anchor</keyword>
<keyword id="KW-0378">Hydrolase</keyword>
<keyword id="KW-0443">Lipid metabolism</keyword>
<keyword id="KW-0449">Lipoprotein</keyword>
<keyword id="KW-0472">Membrane</keyword>
<keyword id="KW-0479">Metal-binding</keyword>
<keyword id="KW-0482">Metalloprotease</keyword>
<keyword id="KW-0645">Protease</keyword>
<keyword id="KW-1185">Reference proteome</keyword>
<keyword id="KW-0732">Signal</keyword>
<keyword id="KW-0862">Zinc</keyword>
<evidence type="ECO:0000250" key="1"/>
<evidence type="ECO:0000250" key="2">
    <source>
        <dbReference type="UniProtKB" id="P16444"/>
    </source>
</evidence>
<evidence type="ECO:0000250" key="3">
    <source>
        <dbReference type="UniProtKB" id="P22412"/>
    </source>
</evidence>
<evidence type="ECO:0000250" key="4">
    <source>
        <dbReference type="UniProtKB" id="P31428"/>
    </source>
</evidence>
<evidence type="ECO:0000255" key="5">
    <source>
        <dbReference type="PROSITE-ProRule" id="PRU10073"/>
    </source>
</evidence>
<evidence type="ECO:0000269" key="6">
    <source>
    </source>
</evidence>
<evidence type="ECO:0000303" key="7">
    <source>
    </source>
</evidence>
<evidence type="ECO:0000305" key="8"/>
<dbReference type="EC" id="3.4.13.19" evidence="4"/>
<dbReference type="EC" id="3.5.2.6" evidence="4"/>
<dbReference type="EMBL" id="X61503">
    <property type="protein sequence ID" value="CAA43720.1"/>
    <property type="molecule type" value="mRNA"/>
</dbReference>
<dbReference type="PIR" id="S18442">
    <property type="entry name" value="S18442"/>
</dbReference>
<dbReference type="RefSeq" id="NP_001095167.1">
    <property type="nucleotide sequence ID" value="NM_001101697.1"/>
</dbReference>
<dbReference type="SMR" id="P31429"/>
<dbReference type="STRING" id="9986.ENSOCUP00000041294"/>
<dbReference type="MEROPS" id="M19.001"/>
<dbReference type="GlyCosmos" id="P31429">
    <property type="glycosylation" value="1 site, No reported glycans"/>
</dbReference>
<dbReference type="PaxDb" id="9986-ENSOCUP00000008950"/>
<dbReference type="GeneID" id="100009273"/>
<dbReference type="KEGG" id="ocu:100009273"/>
<dbReference type="CTD" id="1800"/>
<dbReference type="eggNOG" id="KOG4127">
    <property type="taxonomic scope" value="Eukaryota"/>
</dbReference>
<dbReference type="InParanoid" id="P31429"/>
<dbReference type="OrthoDB" id="445695at2759"/>
<dbReference type="Proteomes" id="UP000001811">
    <property type="component" value="Unplaced"/>
</dbReference>
<dbReference type="GO" id="GO:0045177">
    <property type="term" value="C:apical part of cell"/>
    <property type="evidence" value="ECO:0000250"/>
    <property type="project" value="UniProtKB"/>
</dbReference>
<dbReference type="GO" id="GO:0016324">
    <property type="term" value="C:apical plasma membrane"/>
    <property type="evidence" value="ECO:0007669"/>
    <property type="project" value="UniProtKB-SubCell"/>
</dbReference>
<dbReference type="GO" id="GO:0005615">
    <property type="term" value="C:extracellular space"/>
    <property type="evidence" value="ECO:0000250"/>
    <property type="project" value="UniProtKB"/>
</dbReference>
<dbReference type="GO" id="GO:0031528">
    <property type="term" value="C:microvillus membrane"/>
    <property type="evidence" value="ECO:0007669"/>
    <property type="project" value="UniProtKB-SubCell"/>
</dbReference>
<dbReference type="GO" id="GO:0005886">
    <property type="term" value="C:plasma membrane"/>
    <property type="evidence" value="ECO:0000250"/>
    <property type="project" value="UniProtKB"/>
</dbReference>
<dbReference type="GO" id="GO:0098552">
    <property type="term" value="C:side of membrane"/>
    <property type="evidence" value="ECO:0007669"/>
    <property type="project" value="UniProtKB-KW"/>
</dbReference>
<dbReference type="GO" id="GO:0008800">
    <property type="term" value="F:beta-lactamase activity"/>
    <property type="evidence" value="ECO:0000250"/>
    <property type="project" value="UniProtKB"/>
</dbReference>
<dbReference type="GO" id="GO:0016805">
    <property type="term" value="F:dipeptidase activity"/>
    <property type="evidence" value="ECO:0000250"/>
    <property type="project" value="UniProtKB"/>
</dbReference>
<dbReference type="GO" id="GO:0034235">
    <property type="term" value="F:GPI anchor binding"/>
    <property type="evidence" value="ECO:0000250"/>
    <property type="project" value="UniProtKB"/>
</dbReference>
<dbReference type="GO" id="GO:0070573">
    <property type="term" value="F:metallodipeptidase activity"/>
    <property type="evidence" value="ECO:0000250"/>
    <property type="project" value="UniProtKB"/>
</dbReference>
<dbReference type="GO" id="GO:0072341">
    <property type="term" value="F:modified amino acid binding"/>
    <property type="evidence" value="ECO:0000250"/>
    <property type="project" value="UniProtKB"/>
</dbReference>
<dbReference type="GO" id="GO:0008270">
    <property type="term" value="F:zinc ion binding"/>
    <property type="evidence" value="ECO:0000250"/>
    <property type="project" value="UniProtKB"/>
</dbReference>
<dbReference type="GO" id="GO:0016999">
    <property type="term" value="P:antibiotic metabolic process"/>
    <property type="evidence" value="ECO:0000250"/>
    <property type="project" value="UniProtKB"/>
</dbReference>
<dbReference type="GO" id="GO:0071277">
    <property type="term" value="P:cellular response to calcium ion"/>
    <property type="evidence" value="ECO:0000250"/>
    <property type="project" value="UniProtKB"/>
</dbReference>
<dbReference type="GO" id="GO:0071732">
    <property type="term" value="P:cellular response to nitric oxide"/>
    <property type="evidence" value="ECO:0000250"/>
    <property type="project" value="UniProtKB"/>
</dbReference>
<dbReference type="GO" id="GO:0006751">
    <property type="term" value="P:glutathione catabolic process"/>
    <property type="evidence" value="ECO:0000250"/>
    <property type="project" value="UniProtKB"/>
</dbReference>
<dbReference type="GO" id="GO:0050667">
    <property type="term" value="P:homocysteine metabolic process"/>
    <property type="evidence" value="ECO:0000250"/>
    <property type="project" value="UniProtKB"/>
</dbReference>
<dbReference type="GO" id="GO:0006954">
    <property type="term" value="P:inflammatory response"/>
    <property type="evidence" value="ECO:0000250"/>
    <property type="project" value="UniProtKB"/>
</dbReference>
<dbReference type="GO" id="GO:1901749">
    <property type="term" value="P:leukotriene D4 catabolic process"/>
    <property type="evidence" value="ECO:0000250"/>
    <property type="project" value="UniProtKB"/>
</dbReference>
<dbReference type="GO" id="GO:0006691">
    <property type="term" value="P:leukotriene metabolic process"/>
    <property type="evidence" value="ECO:0000250"/>
    <property type="project" value="UniProtKB"/>
</dbReference>
<dbReference type="GO" id="GO:0030336">
    <property type="term" value="P:negative regulation of cell migration"/>
    <property type="evidence" value="ECO:0000250"/>
    <property type="project" value="UniProtKB"/>
</dbReference>
<dbReference type="GO" id="GO:0030593">
    <property type="term" value="P:neutrophil chemotaxis"/>
    <property type="evidence" value="ECO:0000250"/>
    <property type="project" value="UniProtKB"/>
</dbReference>
<dbReference type="GO" id="GO:0006508">
    <property type="term" value="P:proteolysis"/>
    <property type="evidence" value="ECO:0007669"/>
    <property type="project" value="UniProtKB-KW"/>
</dbReference>
<dbReference type="CDD" id="cd01301">
    <property type="entry name" value="rDP_like"/>
    <property type="match status" value="1"/>
</dbReference>
<dbReference type="FunFam" id="3.20.20.140:FF:000030">
    <property type="entry name" value="Dipeptidase"/>
    <property type="match status" value="1"/>
</dbReference>
<dbReference type="Gene3D" id="3.20.20.140">
    <property type="entry name" value="Metal-dependent hydrolases"/>
    <property type="match status" value="1"/>
</dbReference>
<dbReference type="InterPro" id="IPR000180">
    <property type="entry name" value="Dipep_AS"/>
</dbReference>
<dbReference type="InterPro" id="IPR032466">
    <property type="entry name" value="Metal_Hydrolase"/>
</dbReference>
<dbReference type="InterPro" id="IPR008257">
    <property type="entry name" value="Pept_M19"/>
</dbReference>
<dbReference type="PANTHER" id="PTHR10443:SF38">
    <property type="entry name" value="DIPEPTIDASE 1"/>
    <property type="match status" value="1"/>
</dbReference>
<dbReference type="PANTHER" id="PTHR10443">
    <property type="entry name" value="MICROSOMAL DIPEPTIDASE"/>
    <property type="match status" value="1"/>
</dbReference>
<dbReference type="Pfam" id="PF01244">
    <property type="entry name" value="Peptidase_M19"/>
    <property type="match status" value="1"/>
</dbReference>
<dbReference type="SUPFAM" id="SSF51556">
    <property type="entry name" value="Metallo-dependent hydrolases"/>
    <property type="match status" value="1"/>
</dbReference>
<dbReference type="PROSITE" id="PS00869">
    <property type="entry name" value="RENAL_DIPEPTIDASE_1"/>
    <property type="match status" value="1"/>
</dbReference>
<dbReference type="PROSITE" id="PS51365">
    <property type="entry name" value="RENAL_DIPEPTIDASE_2"/>
    <property type="match status" value="1"/>
</dbReference>
<proteinExistence type="evidence at protein level"/>
<protein>
    <recommendedName>
        <fullName>Dipeptidase 1</fullName>
        <ecNumber evidence="4">3.4.13.19</ecNumber>
    </recommendedName>
    <alternativeName>
        <fullName evidence="7">43 kDa renal band 3-related protein</fullName>
    </alternativeName>
    <alternativeName>
        <fullName evidence="8">Beta-lactamase</fullName>
        <ecNumber evidence="4">3.5.2.6</ecNumber>
    </alternativeName>
    <alternativeName>
        <fullName>Microsomal dipeptidase</fullName>
    </alternativeName>
</protein>
<comment type="function">
    <text evidence="4">Hydrolyzes a wide range of dipeptides including the conversion of leukotriene D4 to leukotriene E4. Hydrolyzes cystinyl-bis-glycine (cys-bis-gly) formed during glutathione degradation. Also possesses beta lactamase activity and hydrolytically inactivates beta-lactam antibiotics.</text>
</comment>
<comment type="function">
    <text evidence="4">Independently of its dipeptidase activity, acts as an adhesion receptor for neutrophil recruitment from bloodstream into inflamed lungs and liver.</text>
</comment>
<comment type="catalytic activity">
    <reaction evidence="4 5">
        <text>an L-aminoacyl-L-amino acid + H2O = 2 an L-alpha-amino acid</text>
        <dbReference type="Rhea" id="RHEA:48940"/>
        <dbReference type="ChEBI" id="CHEBI:15377"/>
        <dbReference type="ChEBI" id="CHEBI:59869"/>
        <dbReference type="ChEBI" id="CHEBI:77460"/>
        <dbReference type="EC" id="3.4.13.19"/>
    </reaction>
</comment>
<comment type="catalytic activity">
    <reaction evidence="4">
        <text>leukotriene D4 + H2O = leukotriene E4 + glycine</text>
        <dbReference type="Rhea" id="RHEA:48616"/>
        <dbReference type="ChEBI" id="CHEBI:15377"/>
        <dbReference type="ChEBI" id="CHEBI:57305"/>
        <dbReference type="ChEBI" id="CHEBI:57462"/>
        <dbReference type="ChEBI" id="CHEBI:63166"/>
    </reaction>
</comment>
<comment type="catalytic activity">
    <reaction evidence="4">
        <text>L-cystine-bis-glycine + 2 H2O = L-cystine + 2 glycine</text>
        <dbReference type="Rhea" id="RHEA:60520"/>
        <dbReference type="ChEBI" id="CHEBI:15377"/>
        <dbReference type="ChEBI" id="CHEBI:35491"/>
        <dbReference type="ChEBI" id="CHEBI:57305"/>
        <dbReference type="ChEBI" id="CHEBI:143812"/>
    </reaction>
</comment>
<comment type="catalytic activity">
    <reaction evidence="4">
        <text>a beta-lactam + H2O = a substituted beta-amino acid</text>
        <dbReference type="Rhea" id="RHEA:20401"/>
        <dbReference type="ChEBI" id="CHEBI:15377"/>
        <dbReference type="ChEBI" id="CHEBI:35627"/>
        <dbReference type="ChEBI" id="CHEBI:140347"/>
        <dbReference type="EC" id="3.5.2.6"/>
    </reaction>
</comment>
<comment type="catalytic activity">
    <reaction evidence="4">
        <text>glycyldehydrophenylalanine + H2O = 2,3-didehydrophenylalanine + glycine</text>
        <dbReference type="Rhea" id="RHEA:62704"/>
        <dbReference type="ChEBI" id="CHEBI:15377"/>
        <dbReference type="ChEBI" id="CHEBI:57305"/>
        <dbReference type="ChEBI" id="CHEBI:145925"/>
        <dbReference type="ChEBI" id="CHEBI:145926"/>
    </reaction>
</comment>
<comment type="cofactor">
    <cofactor evidence="2 5">
        <name>Zn(2+)</name>
        <dbReference type="ChEBI" id="CHEBI:29105"/>
    </cofactor>
</comment>
<comment type="activity regulation">
    <text evidence="2">Inhibited by L-penicillamine. Beta-lactamase activity is inhibited by cilastatin.</text>
</comment>
<comment type="subunit">
    <text evidence="2">Homodimer; disulfide-linked.</text>
</comment>
<comment type="subcellular location">
    <subcellularLocation>
        <location evidence="2">Apical cell membrane</location>
        <topology evidence="2">Lipid-anchor</topology>
        <topology evidence="2">GPI-anchor</topology>
    </subcellularLocation>
    <subcellularLocation>
        <location evidence="2">Cell projection</location>
        <location evidence="2">Microvillus membrane</location>
        <topology evidence="2">Lipid-anchor</topology>
        <topology evidence="2">GPI-anchor</topology>
    </subcellularLocation>
    <text evidence="6">Brush border membrane.</text>
</comment>
<comment type="similarity">
    <text evidence="5">Belongs to the metallo-dependent hydrolases superfamily. Peptidase M19 family.</text>
</comment>